<accession>A5F3E9</accession>
<accession>C3LYD4</accession>
<gene>
    <name evidence="1" type="primary">xseA</name>
    <name type="ordered locus">VC0395_A0294</name>
    <name type="ordered locus">VC395_0783</name>
</gene>
<keyword id="KW-0963">Cytoplasm</keyword>
<keyword id="KW-0269">Exonuclease</keyword>
<keyword id="KW-0378">Hydrolase</keyword>
<keyword id="KW-0540">Nuclease</keyword>
<feature type="chain" id="PRO_1000072164" description="Exodeoxyribonuclease 7 large subunit">
    <location>
        <begin position="1"/>
        <end position="446"/>
    </location>
</feature>
<organism>
    <name type="scientific">Vibrio cholerae serotype O1 (strain ATCC 39541 / Classical Ogawa 395 / O395)</name>
    <dbReference type="NCBI Taxonomy" id="345073"/>
    <lineage>
        <taxon>Bacteria</taxon>
        <taxon>Pseudomonadati</taxon>
        <taxon>Pseudomonadota</taxon>
        <taxon>Gammaproteobacteria</taxon>
        <taxon>Vibrionales</taxon>
        <taxon>Vibrionaceae</taxon>
        <taxon>Vibrio</taxon>
    </lineage>
</organism>
<evidence type="ECO:0000255" key="1">
    <source>
        <dbReference type="HAMAP-Rule" id="MF_00378"/>
    </source>
</evidence>
<comment type="function">
    <text evidence="1">Bidirectionally degrades single-stranded DNA into large acid-insoluble oligonucleotides, which are then degraded further into small acid-soluble oligonucleotides.</text>
</comment>
<comment type="catalytic activity">
    <reaction evidence="1">
        <text>Exonucleolytic cleavage in either 5'- to 3'- or 3'- to 5'-direction to yield nucleoside 5'-phosphates.</text>
        <dbReference type="EC" id="3.1.11.6"/>
    </reaction>
</comment>
<comment type="subunit">
    <text evidence="1">Heterooligomer composed of large and small subunits.</text>
</comment>
<comment type="subcellular location">
    <subcellularLocation>
        <location evidence="1">Cytoplasm</location>
    </subcellularLocation>
</comment>
<comment type="similarity">
    <text evidence="1">Belongs to the XseA family.</text>
</comment>
<sequence length="446" mass="50513">MSSSLANRNIYTVSRLNSEVRLLLENEMGIVWLVGEISNFSAPVSGHWYLTLKDSQAQVKCAMFKGNNRLVNFKPQNGQQVLVKARLSLYEPRGDYQIILESMQPEGDGRLQQQFEQLKMQLAAEGLFAQTRKKPLPENPRCVGIITSRTGAALHDILHVLKRRDPNLPVVIYPTLVQGEEAAIQIAQAIGRANTRAECDVLIVGRGGGSLEDLWCFNHEIVARTIAASEIPIISAVGHEIDVTIADFVADVRAPTPSAAAELVSRDHRHKQQALHQWQAKLASTMRHYLAQQETQFARLQHKLDKQHPQARLERQQQQLDELSLRLEQKMQQRLATQQQRWDRLSHKIELHSPIHLIRQQRFNLIQQEQRINQSIQRYLIQSRHQLALLSEKLDAVSPLAALARGYSVTRTTQGELVRQSAQVKPGDTLVTQLMDGEILSTVNSR</sequence>
<protein>
    <recommendedName>
        <fullName evidence="1">Exodeoxyribonuclease 7 large subunit</fullName>
        <ecNumber evidence="1">3.1.11.6</ecNumber>
    </recommendedName>
    <alternativeName>
        <fullName evidence="1">Exodeoxyribonuclease VII large subunit</fullName>
        <shortName evidence="1">Exonuclease VII large subunit</shortName>
    </alternativeName>
</protein>
<reference key="1">
    <citation type="submission" date="2007-03" db="EMBL/GenBank/DDBJ databases">
        <authorList>
            <person name="Heidelberg J."/>
        </authorList>
    </citation>
    <scope>NUCLEOTIDE SEQUENCE [LARGE SCALE GENOMIC DNA]</scope>
    <source>
        <strain>ATCC 39541 / Classical Ogawa 395 / O395</strain>
    </source>
</reference>
<reference key="2">
    <citation type="journal article" date="2008" name="PLoS ONE">
        <title>A recalibrated molecular clock and independent origins for the cholera pandemic clones.</title>
        <authorList>
            <person name="Feng L."/>
            <person name="Reeves P.R."/>
            <person name="Lan R."/>
            <person name="Ren Y."/>
            <person name="Gao C."/>
            <person name="Zhou Z."/>
            <person name="Ren Y."/>
            <person name="Cheng J."/>
            <person name="Wang W."/>
            <person name="Wang J."/>
            <person name="Qian W."/>
            <person name="Li D."/>
            <person name="Wang L."/>
        </authorList>
    </citation>
    <scope>NUCLEOTIDE SEQUENCE [LARGE SCALE GENOMIC DNA]</scope>
    <source>
        <strain>ATCC 39541 / Classical Ogawa 395 / O395</strain>
    </source>
</reference>
<dbReference type="EC" id="3.1.11.6" evidence="1"/>
<dbReference type="EMBL" id="CP000627">
    <property type="protein sequence ID" value="ABQ21425.1"/>
    <property type="molecule type" value="Genomic_DNA"/>
</dbReference>
<dbReference type="EMBL" id="CP001235">
    <property type="protein sequence ID" value="ACP08800.1"/>
    <property type="molecule type" value="Genomic_DNA"/>
</dbReference>
<dbReference type="RefSeq" id="WP_000099130.1">
    <property type="nucleotide sequence ID" value="NZ_JAACZH010000017.1"/>
</dbReference>
<dbReference type="SMR" id="A5F3E9"/>
<dbReference type="KEGG" id="vco:VC0395_A0294"/>
<dbReference type="KEGG" id="vcr:VC395_0783"/>
<dbReference type="PATRIC" id="fig|345073.21.peg.757"/>
<dbReference type="eggNOG" id="COG1570">
    <property type="taxonomic scope" value="Bacteria"/>
</dbReference>
<dbReference type="HOGENOM" id="CLU_023625_3_1_6"/>
<dbReference type="OrthoDB" id="9802795at2"/>
<dbReference type="Proteomes" id="UP000000249">
    <property type="component" value="Chromosome 2"/>
</dbReference>
<dbReference type="GO" id="GO:0005737">
    <property type="term" value="C:cytoplasm"/>
    <property type="evidence" value="ECO:0007669"/>
    <property type="project" value="UniProtKB-SubCell"/>
</dbReference>
<dbReference type="GO" id="GO:0009318">
    <property type="term" value="C:exodeoxyribonuclease VII complex"/>
    <property type="evidence" value="ECO:0007669"/>
    <property type="project" value="InterPro"/>
</dbReference>
<dbReference type="GO" id="GO:0008855">
    <property type="term" value="F:exodeoxyribonuclease VII activity"/>
    <property type="evidence" value="ECO:0007669"/>
    <property type="project" value="UniProtKB-UniRule"/>
</dbReference>
<dbReference type="GO" id="GO:0003676">
    <property type="term" value="F:nucleic acid binding"/>
    <property type="evidence" value="ECO:0007669"/>
    <property type="project" value="InterPro"/>
</dbReference>
<dbReference type="GO" id="GO:0006308">
    <property type="term" value="P:DNA catabolic process"/>
    <property type="evidence" value="ECO:0007669"/>
    <property type="project" value="UniProtKB-UniRule"/>
</dbReference>
<dbReference type="CDD" id="cd04489">
    <property type="entry name" value="ExoVII_LU_OBF"/>
    <property type="match status" value="1"/>
</dbReference>
<dbReference type="HAMAP" id="MF_00378">
    <property type="entry name" value="Exonuc_7_L"/>
    <property type="match status" value="1"/>
</dbReference>
<dbReference type="InterPro" id="IPR003753">
    <property type="entry name" value="Exonuc_VII_L"/>
</dbReference>
<dbReference type="InterPro" id="IPR020579">
    <property type="entry name" value="Exonuc_VII_lsu_C"/>
</dbReference>
<dbReference type="InterPro" id="IPR025824">
    <property type="entry name" value="OB-fold_nuc-bd_dom"/>
</dbReference>
<dbReference type="NCBIfam" id="TIGR00237">
    <property type="entry name" value="xseA"/>
    <property type="match status" value="1"/>
</dbReference>
<dbReference type="PANTHER" id="PTHR30008">
    <property type="entry name" value="EXODEOXYRIBONUCLEASE 7 LARGE SUBUNIT"/>
    <property type="match status" value="1"/>
</dbReference>
<dbReference type="PANTHER" id="PTHR30008:SF0">
    <property type="entry name" value="EXODEOXYRIBONUCLEASE 7 LARGE SUBUNIT"/>
    <property type="match status" value="1"/>
</dbReference>
<dbReference type="Pfam" id="PF02601">
    <property type="entry name" value="Exonuc_VII_L"/>
    <property type="match status" value="1"/>
</dbReference>
<dbReference type="Pfam" id="PF13742">
    <property type="entry name" value="tRNA_anti_2"/>
    <property type="match status" value="1"/>
</dbReference>
<name>EX7L_VIBC3</name>
<proteinExistence type="inferred from homology"/>